<protein>
    <recommendedName>
        <fullName evidence="1">Serine hydroxymethyltransferase</fullName>
        <shortName evidence="1">SHMT</shortName>
        <shortName evidence="1">Serine methylase</shortName>
        <ecNumber evidence="1">2.1.2.1</ecNumber>
    </recommendedName>
</protein>
<sequence>MNILQNLKESDPVISNFIKSEKNRQETHLELIASENFASIAVMEAQGSVLTNKYAEGLPQKRYYGGCEFVDQIEELAIQRAKKLFNANWANVQPHSGAQANAAVFLSLLKPGDTIMGMDLSHGGHLTHGSPVNMSGKWFNAVHYGVNKETSELNFDEIREIALETKPKLIICGYSAYPRTIDFESFRNIADEVGAFLMADIAHIAGLVASKLHPNPIPYCDVVTTTTHKTLRGPRGGLILCKDAEFGKKFDKSVFPGTQGGPLEHIIAAKAVAFGEALQPDFVNYSQQVIKNAKVLASTLINRGIDIVSGGTDNHIVLLDLRSINMTGKIADLLVSEVNITANKNTVPFDPESPFVTSGLRLGTAALTTRGFNENAFAEVGEIIADRLLNPDDSLIESQCKERVLTLCNRFPLYESKLEASIK</sequence>
<accession>A3PAX9</accession>
<name>GLYA_PROM0</name>
<gene>
    <name evidence="1" type="primary">glyA</name>
    <name type="ordered locus">P9301_02811</name>
</gene>
<proteinExistence type="inferred from homology"/>
<evidence type="ECO:0000255" key="1">
    <source>
        <dbReference type="HAMAP-Rule" id="MF_00051"/>
    </source>
</evidence>
<dbReference type="EC" id="2.1.2.1" evidence="1"/>
<dbReference type="EMBL" id="CP000576">
    <property type="protein sequence ID" value="ABO16904.1"/>
    <property type="molecule type" value="Genomic_DNA"/>
</dbReference>
<dbReference type="RefSeq" id="WP_011862299.1">
    <property type="nucleotide sequence ID" value="NC_009091.1"/>
</dbReference>
<dbReference type="SMR" id="A3PAX9"/>
<dbReference type="STRING" id="167546.P9301_02811"/>
<dbReference type="KEGG" id="pmg:P9301_02811"/>
<dbReference type="eggNOG" id="COG0112">
    <property type="taxonomic scope" value="Bacteria"/>
</dbReference>
<dbReference type="HOGENOM" id="CLU_022477_2_1_3"/>
<dbReference type="OrthoDB" id="9803846at2"/>
<dbReference type="UniPathway" id="UPA00193"/>
<dbReference type="UniPathway" id="UPA00288">
    <property type="reaction ID" value="UER01023"/>
</dbReference>
<dbReference type="Proteomes" id="UP000001430">
    <property type="component" value="Chromosome"/>
</dbReference>
<dbReference type="GO" id="GO:0005829">
    <property type="term" value="C:cytosol"/>
    <property type="evidence" value="ECO:0007669"/>
    <property type="project" value="TreeGrafter"/>
</dbReference>
<dbReference type="GO" id="GO:0004372">
    <property type="term" value="F:glycine hydroxymethyltransferase activity"/>
    <property type="evidence" value="ECO:0007669"/>
    <property type="project" value="UniProtKB-UniRule"/>
</dbReference>
<dbReference type="GO" id="GO:0030170">
    <property type="term" value="F:pyridoxal phosphate binding"/>
    <property type="evidence" value="ECO:0007669"/>
    <property type="project" value="UniProtKB-UniRule"/>
</dbReference>
<dbReference type="GO" id="GO:0019264">
    <property type="term" value="P:glycine biosynthetic process from serine"/>
    <property type="evidence" value="ECO:0007669"/>
    <property type="project" value="UniProtKB-UniRule"/>
</dbReference>
<dbReference type="GO" id="GO:0035999">
    <property type="term" value="P:tetrahydrofolate interconversion"/>
    <property type="evidence" value="ECO:0007669"/>
    <property type="project" value="UniProtKB-UniRule"/>
</dbReference>
<dbReference type="CDD" id="cd00378">
    <property type="entry name" value="SHMT"/>
    <property type="match status" value="1"/>
</dbReference>
<dbReference type="FunFam" id="3.40.640.10:FF:000001">
    <property type="entry name" value="Serine hydroxymethyltransferase"/>
    <property type="match status" value="1"/>
</dbReference>
<dbReference type="FunFam" id="3.90.1150.10:FF:000003">
    <property type="entry name" value="Serine hydroxymethyltransferase"/>
    <property type="match status" value="1"/>
</dbReference>
<dbReference type="Gene3D" id="3.90.1150.10">
    <property type="entry name" value="Aspartate Aminotransferase, domain 1"/>
    <property type="match status" value="1"/>
</dbReference>
<dbReference type="Gene3D" id="3.40.640.10">
    <property type="entry name" value="Type I PLP-dependent aspartate aminotransferase-like (Major domain)"/>
    <property type="match status" value="1"/>
</dbReference>
<dbReference type="HAMAP" id="MF_00051">
    <property type="entry name" value="SHMT"/>
    <property type="match status" value="1"/>
</dbReference>
<dbReference type="InterPro" id="IPR015424">
    <property type="entry name" value="PyrdxlP-dep_Trfase"/>
</dbReference>
<dbReference type="InterPro" id="IPR015421">
    <property type="entry name" value="PyrdxlP-dep_Trfase_major"/>
</dbReference>
<dbReference type="InterPro" id="IPR015422">
    <property type="entry name" value="PyrdxlP-dep_Trfase_small"/>
</dbReference>
<dbReference type="InterPro" id="IPR001085">
    <property type="entry name" value="Ser_HO-MeTrfase"/>
</dbReference>
<dbReference type="InterPro" id="IPR049943">
    <property type="entry name" value="Ser_HO-MeTrfase-like"/>
</dbReference>
<dbReference type="InterPro" id="IPR019798">
    <property type="entry name" value="Ser_HO-MeTrfase_PLP_BS"/>
</dbReference>
<dbReference type="InterPro" id="IPR039429">
    <property type="entry name" value="SHMT-like_dom"/>
</dbReference>
<dbReference type="NCBIfam" id="NF000586">
    <property type="entry name" value="PRK00011.1"/>
    <property type="match status" value="1"/>
</dbReference>
<dbReference type="PANTHER" id="PTHR11680">
    <property type="entry name" value="SERINE HYDROXYMETHYLTRANSFERASE"/>
    <property type="match status" value="1"/>
</dbReference>
<dbReference type="PANTHER" id="PTHR11680:SF35">
    <property type="entry name" value="SERINE HYDROXYMETHYLTRANSFERASE 1"/>
    <property type="match status" value="1"/>
</dbReference>
<dbReference type="Pfam" id="PF00464">
    <property type="entry name" value="SHMT"/>
    <property type="match status" value="1"/>
</dbReference>
<dbReference type="PIRSF" id="PIRSF000412">
    <property type="entry name" value="SHMT"/>
    <property type="match status" value="1"/>
</dbReference>
<dbReference type="SUPFAM" id="SSF53383">
    <property type="entry name" value="PLP-dependent transferases"/>
    <property type="match status" value="1"/>
</dbReference>
<dbReference type="PROSITE" id="PS00096">
    <property type="entry name" value="SHMT"/>
    <property type="match status" value="1"/>
</dbReference>
<organism>
    <name type="scientific">Prochlorococcus marinus (strain MIT 9301)</name>
    <dbReference type="NCBI Taxonomy" id="167546"/>
    <lineage>
        <taxon>Bacteria</taxon>
        <taxon>Bacillati</taxon>
        <taxon>Cyanobacteriota</taxon>
        <taxon>Cyanophyceae</taxon>
        <taxon>Synechococcales</taxon>
        <taxon>Prochlorococcaceae</taxon>
        <taxon>Prochlorococcus</taxon>
    </lineage>
</organism>
<reference key="1">
    <citation type="journal article" date="2007" name="PLoS Genet.">
        <title>Patterns and implications of gene gain and loss in the evolution of Prochlorococcus.</title>
        <authorList>
            <person name="Kettler G.C."/>
            <person name="Martiny A.C."/>
            <person name="Huang K."/>
            <person name="Zucker J."/>
            <person name="Coleman M.L."/>
            <person name="Rodrigue S."/>
            <person name="Chen F."/>
            <person name="Lapidus A."/>
            <person name="Ferriera S."/>
            <person name="Johnson J."/>
            <person name="Steglich C."/>
            <person name="Church G.M."/>
            <person name="Richardson P."/>
            <person name="Chisholm S.W."/>
        </authorList>
    </citation>
    <scope>NUCLEOTIDE SEQUENCE [LARGE SCALE GENOMIC DNA]</scope>
    <source>
        <strain>MIT 9301</strain>
    </source>
</reference>
<keyword id="KW-0028">Amino-acid biosynthesis</keyword>
<keyword id="KW-0963">Cytoplasm</keyword>
<keyword id="KW-0554">One-carbon metabolism</keyword>
<keyword id="KW-0663">Pyridoxal phosphate</keyword>
<keyword id="KW-1185">Reference proteome</keyword>
<keyword id="KW-0808">Transferase</keyword>
<feature type="chain" id="PRO_1000006293" description="Serine hydroxymethyltransferase">
    <location>
        <begin position="1"/>
        <end position="423"/>
    </location>
</feature>
<feature type="binding site" evidence="1">
    <location>
        <position position="120"/>
    </location>
    <ligand>
        <name>(6S)-5,6,7,8-tetrahydrofolate</name>
        <dbReference type="ChEBI" id="CHEBI:57453"/>
    </ligand>
</feature>
<feature type="binding site" evidence="1">
    <location>
        <begin position="124"/>
        <end position="126"/>
    </location>
    <ligand>
        <name>(6S)-5,6,7,8-tetrahydrofolate</name>
        <dbReference type="ChEBI" id="CHEBI:57453"/>
    </ligand>
</feature>
<feature type="binding site" evidence="1">
    <location>
        <begin position="353"/>
        <end position="355"/>
    </location>
    <ligand>
        <name>(6S)-5,6,7,8-tetrahydrofolate</name>
        <dbReference type="ChEBI" id="CHEBI:57453"/>
    </ligand>
</feature>
<feature type="site" description="Plays an important role in substrate specificity" evidence="1">
    <location>
        <position position="228"/>
    </location>
</feature>
<feature type="modified residue" description="N6-(pyridoxal phosphate)lysine" evidence="1">
    <location>
        <position position="229"/>
    </location>
</feature>
<comment type="function">
    <text evidence="1">Catalyzes the reversible interconversion of serine and glycine with tetrahydrofolate (THF) serving as the one-carbon carrier. This reaction serves as the major source of one-carbon groups required for the biosynthesis of purines, thymidylate, methionine, and other important biomolecules. Also exhibits THF-independent aldolase activity toward beta-hydroxyamino acids, producing glycine and aldehydes, via a retro-aldol mechanism.</text>
</comment>
<comment type="catalytic activity">
    <reaction evidence="1">
        <text>(6R)-5,10-methylene-5,6,7,8-tetrahydrofolate + glycine + H2O = (6S)-5,6,7,8-tetrahydrofolate + L-serine</text>
        <dbReference type="Rhea" id="RHEA:15481"/>
        <dbReference type="ChEBI" id="CHEBI:15377"/>
        <dbReference type="ChEBI" id="CHEBI:15636"/>
        <dbReference type="ChEBI" id="CHEBI:33384"/>
        <dbReference type="ChEBI" id="CHEBI:57305"/>
        <dbReference type="ChEBI" id="CHEBI:57453"/>
        <dbReference type="EC" id="2.1.2.1"/>
    </reaction>
</comment>
<comment type="cofactor">
    <cofactor evidence="1">
        <name>pyridoxal 5'-phosphate</name>
        <dbReference type="ChEBI" id="CHEBI:597326"/>
    </cofactor>
</comment>
<comment type="pathway">
    <text evidence="1">One-carbon metabolism; tetrahydrofolate interconversion.</text>
</comment>
<comment type="pathway">
    <text evidence="1">Amino-acid biosynthesis; glycine biosynthesis; glycine from L-serine: step 1/1.</text>
</comment>
<comment type="subunit">
    <text evidence="1">Homodimer.</text>
</comment>
<comment type="subcellular location">
    <subcellularLocation>
        <location evidence="1">Cytoplasm</location>
    </subcellularLocation>
</comment>
<comment type="similarity">
    <text evidence="1">Belongs to the SHMT family.</text>
</comment>